<reference key="1">
    <citation type="submission" date="2007-07" db="EMBL/GenBank/DDBJ databases">
        <title>Complete sequence of chromosome of Shewanella baltica OS185.</title>
        <authorList>
            <consortium name="US DOE Joint Genome Institute"/>
            <person name="Copeland A."/>
            <person name="Lucas S."/>
            <person name="Lapidus A."/>
            <person name="Barry K."/>
            <person name="Glavina del Rio T."/>
            <person name="Dalin E."/>
            <person name="Tice H."/>
            <person name="Pitluck S."/>
            <person name="Sims D."/>
            <person name="Brettin T."/>
            <person name="Bruce D."/>
            <person name="Detter J.C."/>
            <person name="Han C."/>
            <person name="Schmutz J."/>
            <person name="Larimer F."/>
            <person name="Land M."/>
            <person name="Hauser L."/>
            <person name="Kyrpides N."/>
            <person name="Mikhailova N."/>
            <person name="Brettar I."/>
            <person name="Rodrigues J."/>
            <person name="Konstantinidis K."/>
            <person name="Tiedje J."/>
            <person name="Richardson P."/>
        </authorList>
    </citation>
    <scope>NUCLEOTIDE SEQUENCE [LARGE SCALE GENOMIC DNA]</scope>
    <source>
        <strain>OS185</strain>
    </source>
</reference>
<sequence>MKSLSFLNHEFEAFPSPELALNDPNGLLAIGGDLRPERLLSAYYNGIFPWFNSDDPILWWSPDPRAVFIPGEVHISTSLRKYLKKQPWRITINHAFTDVMAGCAQPREKQSGTWITQEIQMAYRELHHTGHAHSIEVWEGERLIGGLYGLAIGQVFCGESMFHRKTNASKAAVAALQQHLLKMGFKLIDAQVMNPHLESLGAKGIKRIDFITLLRELRNNPVDPATWTTKEVILELE</sequence>
<evidence type="ECO:0000255" key="1">
    <source>
        <dbReference type="HAMAP-Rule" id="MF_00688"/>
    </source>
</evidence>
<keyword id="KW-0012">Acyltransferase</keyword>
<keyword id="KW-0963">Cytoplasm</keyword>
<keyword id="KW-0808">Transferase</keyword>
<protein>
    <recommendedName>
        <fullName evidence="1">Leucyl/phenylalanyl-tRNA--protein transferase</fullName>
        <ecNumber evidence="1">2.3.2.6</ecNumber>
    </recommendedName>
    <alternativeName>
        <fullName evidence="1">L/F-transferase</fullName>
    </alternativeName>
    <alternativeName>
        <fullName evidence="1">Leucyltransferase</fullName>
    </alternativeName>
    <alternativeName>
        <fullName evidence="1">Phenyalanyltransferase</fullName>
    </alternativeName>
</protein>
<proteinExistence type="inferred from homology"/>
<feature type="chain" id="PRO_1000045115" description="Leucyl/phenylalanyl-tRNA--protein transferase">
    <location>
        <begin position="1"/>
        <end position="237"/>
    </location>
</feature>
<name>LFTR_SHEB8</name>
<dbReference type="EC" id="2.3.2.6" evidence="1"/>
<dbReference type="EMBL" id="CP000753">
    <property type="protein sequence ID" value="ABS08599.1"/>
    <property type="molecule type" value="Genomic_DNA"/>
</dbReference>
<dbReference type="RefSeq" id="WP_012089393.1">
    <property type="nucleotide sequence ID" value="NC_009665.1"/>
</dbReference>
<dbReference type="SMR" id="A6WP60"/>
<dbReference type="KEGG" id="sbm:Shew185_2462"/>
<dbReference type="HOGENOM" id="CLU_075045_0_0_6"/>
<dbReference type="GO" id="GO:0005737">
    <property type="term" value="C:cytoplasm"/>
    <property type="evidence" value="ECO:0007669"/>
    <property type="project" value="UniProtKB-SubCell"/>
</dbReference>
<dbReference type="GO" id="GO:0008914">
    <property type="term" value="F:leucyl-tRNA--protein transferase activity"/>
    <property type="evidence" value="ECO:0007669"/>
    <property type="project" value="UniProtKB-UniRule"/>
</dbReference>
<dbReference type="GO" id="GO:0030163">
    <property type="term" value="P:protein catabolic process"/>
    <property type="evidence" value="ECO:0007669"/>
    <property type="project" value="UniProtKB-UniRule"/>
</dbReference>
<dbReference type="FunFam" id="3.30.70.3550:FF:000001">
    <property type="entry name" value="Leucyl/phenylalanyl-tRNA--protein transferase"/>
    <property type="match status" value="1"/>
</dbReference>
<dbReference type="FunFam" id="3.40.630.70:FF:000001">
    <property type="entry name" value="Leucyl/phenylalanyl-tRNA--protein transferase"/>
    <property type="match status" value="1"/>
</dbReference>
<dbReference type="Gene3D" id="3.40.630.70">
    <property type="entry name" value="Leucyl/phenylalanyl-tRNA-protein transferase, C-terminal domain"/>
    <property type="match status" value="1"/>
</dbReference>
<dbReference type="Gene3D" id="3.30.70.3550">
    <property type="entry name" value="Leucyl/phenylalanyl-tRNA-protein transferase, N-terminal domain"/>
    <property type="match status" value="1"/>
</dbReference>
<dbReference type="HAMAP" id="MF_00688">
    <property type="entry name" value="Leu_Phe_trans"/>
    <property type="match status" value="1"/>
</dbReference>
<dbReference type="InterPro" id="IPR016181">
    <property type="entry name" value="Acyl_CoA_acyltransferase"/>
</dbReference>
<dbReference type="InterPro" id="IPR004616">
    <property type="entry name" value="Leu/Phe-tRNA_Trfase"/>
</dbReference>
<dbReference type="InterPro" id="IPR042203">
    <property type="entry name" value="Leu/Phe-tRNA_Trfase_C"/>
</dbReference>
<dbReference type="InterPro" id="IPR042221">
    <property type="entry name" value="Leu/Phe-tRNA_Trfase_N"/>
</dbReference>
<dbReference type="NCBIfam" id="TIGR00667">
    <property type="entry name" value="aat"/>
    <property type="match status" value="1"/>
</dbReference>
<dbReference type="PANTHER" id="PTHR30098">
    <property type="entry name" value="LEUCYL/PHENYLALANYL-TRNA--PROTEIN TRANSFERASE"/>
    <property type="match status" value="1"/>
</dbReference>
<dbReference type="PANTHER" id="PTHR30098:SF2">
    <property type="entry name" value="LEUCYL_PHENYLALANYL-TRNA--PROTEIN TRANSFERASE"/>
    <property type="match status" value="1"/>
</dbReference>
<dbReference type="Pfam" id="PF03588">
    <property type="entry name" value="Leu_Phe_trans"/>
    <property type="match status" value="1"/>
</dbReference>
<dbReference type="SUPFAM" id="SSF55729">
    <property type="entry name" value="Acyl-CoA N-acyltransferases (Nat)"/>
    <property type="match status" value="1"/>
</dbReference>
<gene>
    <name evidence="1" type="primary">aat</name>
    <name type="ordered locus">Shew185_2462</name>
</gene>
<organism>
    <name type="scientific">Shewanella baltica (strain OS185)</name>
    <dbReference type="NCBI Taxonomy" id="402882"/>
    <lineage>
        <taxon>Bacteria</taxon>
        <taxon>Pseudomonadati</taxon>
        <taxon>Pseudomonadota</taxon>
        <taxon>Gammaproteobacteria</taxon>
        <taxon>Alteromonadales</taxon>
        <taxon>Shewanellaceae</taxon>
        <taxon>Shewanella</taxon>
    </lineage>
</organism>
<comment type="function">
    <text evidence="1">Functions in the N-end rule pathway of protein degradation where it conjugates Leu, Phe and, less efficiently, Met from aminoacyl-tRNAs to the N-termini of proteins containing an N-terminal arginine or lysine.</text>
</comment>
<comment type="catalytic activity">
    <reaction evidence="1">
        <text>N-terminal L-lysyl-[protein] + L-leucyl-tRNA(Leu) = N-terminal L-leucyl-L-lysyl-[protein] + tRNA(Leu) + H(+)</text>
        <dbReference type="Rhea" id="RHEA:12340"/>
        <dbReference type="Rhea" id="RHEA-COMP:9613"/>
        <dbReference type="Rhea" id="RHEA-COMP:9622"/>
        <dbReference type="Rhea" id="RHEA-COMP:12670"/>
        <dbReference type="Rhea" id="RHEA-COMP:12671"/>
        <dbReference type="ChEBI" id="CHEBI:15378"/>
        <dbReference type="ChEBI" id="CHEBI:65249"/>
        <dbReference type="ChEBI" id="CHEBI:78442"/>
        <dbReference type="ChEBI" id="CHEBI:78494"/>
        <dbReference type="ChEBI" id="CHEBI:133043"/>
        <dbReference type="EC" id="2.3.2.6"/>
    </reaction>
</comment>
<comment type="catalytic activity">
    <reaction evidence="1">
        <text>N-terminal L-arginyl-[protein] + L-leucyl-tRNA(Leu) = N-terminal L-leucyl-L-arginyl-[protein] + tRNA(Leu) + H(+)</text>
        <dbReference type="Rhea" id="RHEA:50416"/>
        <dbReference type="Rhea" id="RHEA-COMP:9613"/>
        <dbReference type="Rhea" id="RHEA-COMP:9622"/>
        <dbReference type="Rhea" id="RHEA-COMP:12672"/>
        <dbReference type="Rhea" id="RHEA-COMP:12673"/>
        <dbReference type="ChEBI" id="CHEBI:15378"/>
        <dbReference type="ChEBI" id="CHEBI:64719"/>
        <dbReference type="ChEBI" id="CHEBI:78442"/>
        <dbReference type="ChEBI" id="CHEBI:78494"/>
        <dbReference type="ChEBI" id="CHEBI:133044"/>
        <dbReference type="EC" id="2.3.2.6"/>
    </reaction>
</comment>
<comment type="catalytic activity">
    <reaction evidence="1">
        <text>L-phenylalanyl-tRNA(Phe) + an N-terminal L-alpha-aminoacyl-[protein] = an N-terminal L-phenylalanyl-L-alpha-aminoacyl-[protein] + tRNA(Phe)</text>
        <dbReference type="Rhea" id="RHEA:43632"/>
        <dbReference type="Rhea" id="RHEA-COMP:9668"/>
        <dbReference type="Rhea" id="RHEA-COMP:9699"/>
        <dbReference type="Rhea" id="RHEA-COMP:10636"/>
        <dbReference type="Rhea" id="RHEA-COMP:10637"/>
        <dbReference type="ChEBI" id="CHEBI:78442"/>
        <dbReference type="ChEBI" id="CHEBI:78531"/>
        <dbReference type="ChEBI" id="CHEBI:78597"/>
        <dbReference type="ChEBI" id="CHEBI:83561"/>
        <dbReference type="EC" id="2.3.2.6"/>
    </reaction>
</comment>
<comment type="subcellular location">
    <subcellularLocation>
        <location evidence="1">Cytoplasm</location>
    </subcellularLocation>
</comment>
<comment type="similarity">
    <text evidence="1">Belongs to the L/F-transferase family.</text>
</comment>
<accession>A6WP60</accession>